<dbReference type="EC" id="4.2.1.90" evidence="1"/>
<dbReference type="EMBL" id="CP000802">
    <property type="protein sequence ID" value="ABV06667.1"/>
    <property type="molecule type" value="Genomic_DNA"/>
</dbReference>
<dbReference type="SMR" id="A8A2B3"/>
<dbReference type="KEGG" id="ecx:EcHS_A2389"/>
<dbReference type="HOGENOM" id="CLU_030273_1_0_6"/>
<dbReference type="GO" id="GO:0050032">
    <property type="term" value="F:L-rhamnonate dehydratase activity"/>
    <property type="evidence" value="ECO:0007669"/>
    <property type="project" value="UniProtKB-UniRule"/>
</dbReference>
<dbReference type="GO" id="GO:0000287">
    <property type="term" value="F:magnesium ion binding"/>
    <property type="evidence" value="ECO:0007669"/>
    <property type="project" value="UniProtKB-UniRule"/>
</dbReference>
<dbReference type="GO" id="GO:0009063">
    <property type="term" value="P:amino acid catabolic process"/>
    <property type="evidence" value="ECO:0007669"/>
    <property type="project" value="InterPro"/>
</dbReference>
<dbReference type="GO" id="GO:0016052">
    <property type="term" value="P:carbohydrate catabolic process"/>
    <property type="evidence" value="ECO:0007669"/>
    <property type="project" value="TreeGrafter"/>
</dbReference>
<dbReference type="CDD" id="cd03327">
    <property type="entry name" value="MR_like_2"/>
    <property type="match status" value="1"/>
</dbReference>
<dbReference type="FunFam" id="3.30.390.10:FF:000007">
    <property type="entry name" value="L-rhamnonate dehydratase"/>
    <property type="match status" value="1"/>
</dbReference>
<dbReference type="FunFam" id="3.20.20.120:FF:000005">
    <property type="entry name" value="Putative L-rhamnonate dehydratase"/>
    <property type="match status" value="1"/>
</dbReference>
<dbReference type="Gene3D" id="3.20.20.120">
    <property type="entry name" value="Enolase-like C-terminal domain"/>
    <property type="match status" value="1"/>
</dbReference>
<dbReference type="Gene3D" id="3.30.390.10">
    <property type="entry name" value="Enolase-like, N-terminal domain"/>
    <property type="match status" value="1"/>
</dbReference>
<dbReference type="HAMAP" id="MF_01288">
    <property type="entry name" value="Rhamnon_dehydrat"/>
    <property type="match status" value="1"/>
</dbReference>
<dbReference type="InterPro" id="IPR036849">
    <property type="entry name" value="Enolase-like_C_sf"/>
</dbReference>
<dbReference type="InterPro" id="IPR029017">
    <property type="entry name" value="Enolase-like_N"/>
</dbReference>
<dbReference type="InterPro" id="IPR029065">
    <property type="entry name" value="Enolase_C-like"/>
</dbReference>
<dbReference type="InterPro" id="IPR023444">
    <property type="entry name" value="L-Rhamnon_dehydrat"/>
</dbReference>
<dbReference type="InterPro" id="IPR018110">
    <property type="entry name" value="Mandel_Rmase/mucon_lact_enz_CS"/>
</dbReference>
<dbReference type="InterPro" id="IPR013342">
    <property type="entry name" value="Mandelate_racemase_C"/>
</dbReference>
<dbReference type="InterPro" id="IPR013341">
    <property type="entry name" value="Mandelate_racemase_N_dom"/>
</dbReference>
<dbReference type="InterPro" id="IPR046945">
    <property type="entry name" value="RHMD-like"/>
</dbReference>
<dbReference type="NCBIfam" id="NF011968">
    <property type="entry name" value="PRK15440.1"/>
    <property type="match status" value="1"/>
</dbReference>
<dbReference type="PANTHER" id="PTHR13794">
    <property type="entry name" value="ENOLASE SUPERFAMILY, MANDELATE RACEMASE"/>
    <property type="match status" value="1"/>
</dbReference>
<dbReference type="PANTHER" id="PTHR13794:SF58">
    <property type="entry name" value="MITOCHONDRIAL ENOLASE SUPERFAMILY MEMBER 1"/>
    <property type="match status" value="1"/>
</dbReference>
<dbReference type="Pfam" id="PF13378">
    <property type="entry name" value="MR_MLE_C"/>
    <property type="match status" value="1"/>
</dbReference>
<dbReference type="Pfam" id="PF02746">
    <property type="entry name" value="MR_MLE_N"/>
    <property type="match status" value="1"/>
</dbReference>
<dbReference type="SFLD" id="SFLDS00001">
    <property type="entry name" value="Enolase"/>
    <property type="match status" value="1"/>
</dbReference>
<dbReference type="SFLD" id="SFLDF00006">
    <property type="entry name" value="rhamnonate_dehydratase"/>
    <property type="match status" value="1"/>
</dbReference>
<dbReference type="SMART" id="SM00922">
    <property type="entry name" value="MR_MLE"/>
    <property type="match status" value="1"/>
</dbReference>
<dbReference type="SUPFAM" id="SSF51604">
    <property type="entry name" value="Enolase C-terminal domain-like"/>
    <property type="match status" value="1"/>
</dbReference>
<dbReference type="SUPFAM" id="SSF54826">
    <property type="entry name" value="Enolase N-terminal domain-like"/>
    <property type="match status" value="1"/>
</dbReference>
<dbReference type="PROSITE" id="PS00908">
    <property type="entry name" value="MR_MLE_1"/>
    <property type="match status" value="1"/>
</dbReference>
<organism>
    <name type="scientific">Escherichia coli O9:H4 (strain HS)</name>
    <dbReference type="NCBI Taxonomy" id="331112"/>
    <lineage>
        <taxon>Bacteria</taxon>
        <taxon>Pseudomonadati</taxon>
        <taxon>Pseudomonadota</taxon>
        <taxon>Gammaproteobacteria</taxon>
        <taxon>Enterobacterales</taxon>
        <taxon>Enterobacteriaceae</taxon>
        <taxon>Escherichia</taxon>
    </lineage>
</organism>
<proteinExistence type="inferred from homology"/>
<protein>
    <recommendedName>
        <fullName evidence="1">L-rhamnonate dehydratase</fullName>
        <shortName evidence="1">RhamD</shortName>
        <ecNumber evidence="1">4.2.1.90</ecNumber>
    </recommendedName>
</protein>
<reference key="1">
    <citation type="journal article" date="2008" name="J. Bacteriol.">
        <title>The pangenome structure of Escherichia coli: comparative genomic analysis of E. coli commensal and pathogenic isolates.</title>
        <authorList>
            <person name="Rasko D.A."/>
            <person name="Rosovitz M.J."/>
            <person name="Myers G.S.A."/>
            <person name="Mongodin E.F."/>
            <person name="Fricke W.F."/>
            <person name="Gajer P."/>
            <person name="Crabtree J."/>
            <person name="Sebaihia M."/>
            <person name="Thomson N.R."/>
            <person name="Chaudhuri R."/>
            <person name="Henderson I.R."/>
            <person name="Sperandio V."/>
            <person name="Ravel J."/>
        </authorList>
    </citation>
    <scope>NUCLEOTIDE SEQUENCE [LARGE SCALE GENOMIC DNA]</scope>
    <source>
        <strain>HS</strain>
    </source>
</reference>
<feature type="chain" id="PRO_0000351699" description="L-rhamnonate dehydratase">
    <location>
        <begin position="1"/>
        <end position="405"/>
    </location>
</feature>
<feature type="active site" description="Proton acceptor" evidence="1">
    <location>
        <position position="329"/>
    </location>
</feature>
<feature type="binding site" evidence="1">
    <location>
        <position position="33"/>
    </location>
    <ligand>
        <name>substrate</name>
    </ligand>
</feature>
<feature type="binding site" evidence="1">
    <location>
        <position position="59"/>
    </location>
    <ligand>
        <name>substrate</name>
    </ligand>
</feature>
<feature type="binding site" evidence="1">
    <location>
        <position position="226"/>
    </location>
    <ligand>
        <name>Mg(2+)</name>
        <dbReference type="ChEBI" id="CHEBI:18420"/>
    </ligand>
</feature>
<feature type="binding site" evidence="1">
    <location>
        <position position="252"/>
    </location>
    <ligand>
        <name>Mg(2+)</name>
        <dbReference type="ChEBI" id="CHEBI:18420"/>
    </ligand>
</feature>
<feature type="binding site" evidence="1">
    <location>
        <position position="280"/>
    </location>
    <ligand>
        <name>Mg(2+)</name>
        <dbReference type="ChEBI" id="CHEBI:18420"/>
    </ligand>
</feature>
<feature type="binding site" evidence="1">
    <location>
        <position position="349"/>
    </location>
    <ligand>
        <name>substrate</name>
    </ligand>
</feature>
<feature type="site" description="Increases basicity of active site His" evidence="1">
    <location>
        <position position="302"/>
    </location>
</feature>
<feature type="site" description="Transition state stabilizer" evidence="1">
    <location>
        <position position="349"/>
    </location>
</feature>
<keyword id="KW-0456">Lyase</keyword>
<keyword id="KW-0460">Magnesium</keyword>
<keyword id="KW-0479">Metal-binding</keyword>
<name>RHMD_ECOHS</name>
<gene>
    <name evidence="1" type="primary">rhmD</name>
    <name type="ordered locus">EcHS_A2389</name>
</gene>
<comment type="function">
    <text evidence="1">Catalyzes the dehydration of L-rhamnonate to 2-keto-3-deoxy-L-rhamnonate (KDR).</text>
</comment>
<comment type="catalytic activity">
    <reaction evidence="1">
        <text>L-rhamnonate = 2-dehydro-3-deoxy-L-rhamnonate + H2O</text>
        <dbReference type="Rhea" id="RHEA:23080"/>
        <dbReference type="ChEBI" id="CHEBI:15377"/>
        <dbReference type="ChEBI" id="CHEBI:58118"/>
        <dbReference type="ChEBI" id="CHEBI:58371"/>
        <dbReference type="EC" id="4.2.1.90"/>
    </reaction>
</comment>
<comment type="cofactor">
    <cofactor evidence="1">
        <name>Mg(2+)</name>
        <dbReference type="ChEBI" id="CHEBI:18420"/>
    </cofactor>
    <text evidence="1">Binds 1 Mg(2+) ion per subunit.</text>
</comment>
<comment type="subunit">
    <text evidence="1">Homooctamer; tetramer of dimers.</text>
</comment>
<comment type="miscellaneous">
    <text evidence="1">Reaction proceeds via a syn dehydration.</text>
</comment>
<comment type="similarity">
    <text evidence="1">Belongs to the mandelate racemase/muconate lactonizing enzyme family. RhamD subfamily.</text>
</comment>
<sequence length="405" mass="44684">MENIMTLPKIKQVRAWFTGGATAEKGAGGGDYHDQGANHWIDDHIATPMSKYRDYEQSRQSFGINVLGTLVVEVEAENGQTGFAVSTAGEMGCFIVEKHLNRFIEGKCVSDIKLIHDQMLSATLYYSGSGGLVMNTISCVDLALWDLFGKVVGLPVYKLLGGAVRDEIQFYATGARPDLAKEMGFIGGKMPTHWGPHDGDAGIRKDAAMVADMREKCGEDFWLMLDCWMSQDVNYATKLAHACAPYNLKWIEECLPPQQYEGYRELKRNAPVGMMVTSGEHHGTLQSFRTLSETGIDIMQPDVGWCGGLTTLVEIAAIAKSRGQLVVPHGSSVYSHHAVITFTNTPFSEFLMTSPDCSTMRPQFDPILLNEPVPVNGRIHKSVLDKPGFGVELNRDCNLKRPYSH</sequence>
<accession>A8A2B3</accession>
<evidence type="ECO:0000255" key="1">
    <source>
        <dbReference type="HAMAP-Rule" id="MF_01288"/>
    </source>
</evidence>